<evidence type="ECO:0000250" key="1">
    <source>
        <dbReference type="UniProtKB" id="O15381"/>
    </source>
</evidence>
<evidence type="ECO:0000255" key="2"/>
<evidence type="ECO:0000256" key="3">
    <source>
        <dbReference type="SAM" id="MobiDB-lite"/>
    </source>
</evidence>
<evidence type="ECO:0000269" key="4">
    <source>
    </source>
</evidence>
<evidence type="ECO:0000305" key="5"/>
<evidence type="ECO:0000312" key="6">
    <source>
        <dbReference type="MGI" id="MGI:1914709"/>
    </source>
</evidence>
<evidence type="ECO:0007744" key="7">
    <source>
    </source>
</evidence>
<evidence type="ECO:0007744" key="8">
    <source>
    </source>
</evidence>
<evidence type="ECO:0007744" key="9">
    <source>
    </source>
</evidence>
<evidence type="ECO:0007744" key="10">
    <source>
    </source>
</evidence>
<evidence type="ECO:0007829" key="11">
    <source>
        <dbReference type="PDB" id="2RRE"/>
    </source>
</evidence>
<name>NVL_MOUSE</name>
<dbReference type="EMBL" id="AK004676">
    <property type="protein sequence ID" value="BAB23464.1"/>
    <property type="molecule type" value="mRNA"/>
</dbReference>
<dbReference type="EMBL" id="AK054502">
    <property type="protein sequence ID" value="BAC35806.1"/>
    <property type="molecule type" value="mRNA"/>
</dbReference>
<dbReference type="EMBL" id="AK140509">
    <property type="protein sequence ID" value="BAE24409.1"/>
    <property type="molecule type" value="mRNA"/>
</dbReference>
<dbReference type="EMBL" id="BC031847">
    <property type="protein sequence ID" value="AAH31847.1"/>
    <property type="molecule type" value="mRNA"/>
</dbReference>
<dbReference type="CCDS" id="CCDS15581.1"/>
<dbReference type="RefSeq" id="NP_080447.1">
    <property type="nucleotide sequence ID" value="NM_026171.2"/>
</dbReference>
<dbReference type="PDB" id="2RRE">
    <property type="method" value="NMR"/>
    <property type="chains" value="A=1-74"/>
</dbReference>
<dbReference type="PDBsum" id="2RRE"/>
<dbReference type="BMRB" id="Q9DBY8"/>
<dbReference type="SMR" id="Q9DBY8"/>
<dbReference type="BioGRID" id="212203">
    <property type="interactions" value="28"/>
</dbReference>
<dbReference type="FunCoup" id="Q9DBY8">
    <property type="interactions" value="4497"/>
</dbReference>
<dbReference type="IntAct" id="Q9DBY8">
    <property type="interactions" value="1"/>
</dbReference>
<dbReference type="MINT" id="Q9DBY8"/>
<dbReference type="STRING" id="10090.ENSMUSP00000027797"/>
<dbReference type="GlyGen" id="Q9DBY8">
    <property type="glycosylation" value="1 site, 1 O-linked glycan (1 site)"/>
</dbReference>
<dbReference type="iPTMnet" id="Q9DBY8"/>
<dbReference type="PhosphoSitePlus" id="Q9DBY8"/>
<dbReference type="jPOST" id="Q9DBY8"/>
<dbReference type="PaxDb" id="10090-ENSMUSP00000027797"/>
<dbReference type="PeptideAtlas" id="Q9DBY8"/>
<dbReference type="ProteomicsDB" id="287865"/>
<dbReference type="Pumba" id="Q9DBY8"/>
<dbReference type="Antibodypedia" id="34637">
    <property type="antibodies" value="219 antibodies from 28 providers"/>
</dbReference>
<dbReference type="DNASU" id="67459"/>
<dbReference type="Ensembl" id="ENSMUST00000027797.9">
    <property type="protein sequence ID" value="ENSMUSP00000027797.8"/>
    <property type="gene ID" value="ENSMUSG00000026516.9"/>
</dbReference>
<dbReference type="GeneID" id="67459"/>
<dbReference type="KEGG" id="mmu:67459"/>
<dbReference type="UCSC" id="uc007dxb.1">
    <property type="organism name" value="mouse"/>
</dbReference>
<dbReference type="AGR" id="MGI:1914709"/>
<dbReference type="CTD" id="4931"/>
<dbReference type="MGI" id="MGI:1914709">
    <property type="gene designation" value="Nvl"/>
</dbReference>
<dbReference type="VEuPathDB" id="HostDB:ENSMUSG00000026516"/>
<dbReference type="eggNOG" id="KOG0733">
    <property type="taxonomic scope" value="Eukaryota"/>
</dbReference>
<dbReference type="GeneTree" id="ENSGT00570000079239"/>
<dbReference type="HOGENOM" id="CLU_000688_8_3_1"/>
<dbReference type="InParanoid" id="Q9DBY8"/>
<dbReference type="OMA" id="GLWSTHR"/>
<dbReference type="OrthoDB" id="2187at2759"/>
<dbReference type="PhylomeDB" id="Q9DBY8"/>
<dbReference type="TreeFam" id="TF314681"/>
<dbReference type="BioGRID-ORCS" id="67459">
    <property type="hits" value="23 hits in 79 CRISPR screens"/>
</dbReference>
<dbReference type="ChiTaRS" id="Nvl">
    <property type="organism name" value="mouse"/>
</dbReference>
<dbReference type="EvolutionaryTrace" id="Q9DBY8"/>
<dbReference type="PRO" id="PR:Q9DBY8"/>
<dbReference type="Proteomes" id="UP000000589">
    <property type="component" value="Chromosome 1"/>
</dbReference>
<dbReference type="RNAct" id="Q9DBY8">
    <property type="molecule type" value="protein"/>
</dbReference>
<dbReference type="Bgee" id="ENSMUSG00000026516">
    <property type="expression patterns" value="Expressed in embryonic post-anal tail and 245 other cell types or tissues"/>
</dbReference>
<dbReference type="GO" id="GO:0000176">
    <property type="term" value="C:nuclear exosome (RNase complex)"/>
    <property type="evidence" value="ECO:0007669"/>
    <property type="project" value="Ensembl"/>
</dbReference>
<dbReference type="GO" id="GO:0005730">
    <property type="term" value="C:nucleolus"/>
    <property type="evidence" value="ECO:0007669"/>
    <property type="project" value="UniProtKB-SubCell"/>
</dbReference>
<dbReference type="GO" id="GO:0005654">
    <property type="term" value="C:nucleoplasm"/>
    <property type="evidence" value="ECO:0000250"/>
    <property type="project" value="UniProtKB"/>
</dbReference>
<dbReference type="GO" id="GO:0005634">
    <property type="term" value="C:nucleus"/>
    <property type="evidence" value="ECO:0000250"/>
    <property type="project" value="UniProtKB"/>
</dbReference>
<dbReference type="GO" id="GO:0005697">
    <property type="term" value="C:telomerase holoenzyme complex"/>
    <property type="evidence" value="ECO:0000250"/>
    <property type="project" value="UniProtKB"/>
</dbReference>
<dbReference type="GO" id="GO:0005524">
    <property type="term" value="F:ATP binding"/>
    <property type="evidence" value="ECO:0000250"/>
    <property type="project" value="UniProtKB"/>
</dbReference>
<dbReference type="GO" id="GO:0016887">
    <property type="term" value="F:ATP hydrolysis activity"/>
    <property type="evidence" value="ECO:0007669"/>
    <property type="project" value="InterPro"/>
</dbReference>
<dbReference type="GO" id="GO:1990275">
    <property type="term" value="F:preribosome binding"/>
    <property type="evidence" value="ECO:0000250"/>
    <property type="project" value="UniProtKB"/>
</dbReference>
<dbReference type="GO" id="GO:0032092">
    <property type="term" value="P:positive regulation of protein binding"/>
    <property type="evidence" value="ECO:0000250"/>
    <property type="project" value="UniProtKB"/>
</dbReference>
<dbReference type="GO" id="GO:0032206">
    <property type="term" value="P:positive regulation of telomere maintenance"/>
    <property type="evidence" value="ECO:0007669"/>
    <property type="project" value="Ensembl"/>
</dbReference>
<dbReference type="GO" id="GO:1904749">
    <property type="term" value="P:regulation of protein localization to nucleolus"/>
    <property type="evidence" value="ECO:0000250"/>
    <property type="project" value="UniProtKB"/>
</dbReference>
<dbReference type="GO" id="GO:0042273">
    <property type="term" value="P:ribosomal large subunit biogenesis"/>
    <property type="evidence" value="ECO:0000250"/>
    <property type="project" value="UniProtKB"/>
</dbReference>
<dbReference type="GO" id="GO:0042254">
    <property type="term" value="P:ribosome biogenesis"/>
    <property type="evidence" value="ECO:0000250"/>
    <property type="project" value="UniProtKB"/>
</dbReference>
<dbReference type="GO" id="GO:0006364">
    <property type="term" value="P:rRNA processing"/>
    <property type="evidence" value="ECO:0000250"/>
    <property type="project" value="UniProtKB"/>
</dbReference>
<dbReference type="GO" id="GO:1905323">
    <property type="term" value="P:telomerase holoenzyme complex assembly"/>
    <property type="evidence" value="ECO:0007669"/>
    <property type="project" value="Ensembl"/>
</dbReference>
<dbReference type="CDD" id="cd19518">
    <property type="entry name" value="RecA-like_NVL_r1-like"/>
    <property type="match status" value="1"/>
</dbReference>
<dbReference type="CDD" id="cd19530">
    <property type="entry name" value="RecA-like_NVL_r2-like"/>
    <property type="match status" value="1"/>
</dbReference>
<dbReference type="FunFam" id="1.10.10.2010:FF:000001">
    <property type="entry name" value="Nuclear valosin-containing protein-like"/>
    <property type="match status" value="1"/>
</dbReference>
<dbReference type="FunFam" id="1.10.8.60:FF:000063">
    <property type="entry name" value="Nuclear valosin-containing protein-like"/>
    <property type="match status" value="1"/>
</dbReference>
<dbReference type="FunFam" id="1.10.8.60:FF:000172">
    <property type="entry name" value="Nuclear valosin-containing protein-like"/>
    <property type="match status" value="1"/>
</dbReference>
<dbReference type="FunFam" id="3.40.50.300:FF:000149">
    <property type="entry name" value="Nuclear valosin-containing protein-like"/>
    <property type="match status" value="1"/>
</dbReference>
<dbReference type="FunFam" id="3.40.50.300:FF:000600">
    <property type="entry name" value="Nuclear valosin-containing protein-like"/>
    <property type="match status" value="1"/>
</dbReference>
<dbReference type="Gene3D" id="1.10.10.2010">
    <property type="match status" value="1"/>
</dbReference>
<dbReference type="Gene3D" id="1.10.8.60">
    <property type="match status" value="2"/>
</dbReference>
<dbReference type="Gene3D" id="3.40.50.300">
    <property type="entry name" value="P-loop containing nucleotide triphosphate hydrolases"/>
    <property type="match status" value="2"/>
</dbReference>
<dbReference type="InterPro" id="IPR003593">
    <property type="entry name" value="AAA+_ATPase"/>
</dbReference>
<dbReference type="InterPro" id="IPR050168">
    <property type="entry name" value="AAA_ATPase_domain"/>
</dbReference>
<dbReference type="InterPro" id="IPR041569">
    <property type="entry name" value="AAA_lid_3"/>
</dbReference>
<dbReference type="InterPro" id="IPR003959">
    <property type="entry name" value="ATPase_AAA_core"/>
</dbReference>
<dbReference type="InterPro" id="IPR003960">
    <property type="entry name" value="ATPase_AAA_CS"/>
</dbReference>
<dbReference type="InterPro" id="IPR038100">
    <property type="entry name" value="NLV2_N_sf"/>
</dbReference>
<dbReference type="InterPro" id="IPR031996">
    <property type="entry name" value="NVL2_nucleolin-bd"/>
</dbReference>
<dbReference type="InterPro" id="IPR027417">
    <property type="entry name" value="P-loop_NTPase"/>
</dbReference>
<dbReference type="PANTHER" id="PTHR23077">
    <property type="entry name" value="AAA-FAMILY ATPASE"/>
    <property type="match status" value="1"/>
</dbReference>
<dbReference type="PANTHER" id="PTHR23077:SF171">
    <property type="entry name" value="NUCLEAR VALOSIN-CONTAINING PROTEIN-LIKE"/>
    <property type="match status" value="1"/>
</dbReference>
<dbReference type="Pfam" id="PF00004">
    <property type="entry name" value="AAA"/>
    <property type="match status" value="2"/>
</dbReference>
<dbReference type="Pfam" id="PF17862">
    <property type="entry name" value="AAA_lid_3"/>
    <property type="match status" value="2"/>
</dbReference>
<dbReference type="Pfam" id="PF16725">
    <property type="entry name" value="Nucleolin_bd"/>
    <property type="match status" value="1"/>
</dbReference>
<dbReference type="SMART" id="SM00382">
    <property type="entry name" value="AAA"/>
    <property type="match status" value="2"/>
</dbReference>
<dbReference type="SUPFAM" id="SSF52540">
    <property type="entry name" value="P-loop containing nucleoside triphosphate hydrolases"/>
    <property type="match status" value="2"/>
</dbReference>
<dbReference type="PROSITE" id="PS00674">
    <property type="entry name" value="AAA"/>
    <property type="match status" value="2"/>
</dbReference>
<keyword id="KW-0002">3D-structure</keyword>
<keyword id="KW-0007">Acetylation</keyword>
<keyword id="KW-0067">ATP-binding</keyword>
<keyword id="KW-1017">Isopeptide bond</keyword>
<keyword id="KW-0547">Nucleotide-binding</keyword>
<keyword id="KW-0539">Nucleus</keyword>
<keyword id="KW-0597">Phosphoprotein</keyword>
<keyword id="KW-1185">Reference proteome</keyword>
<keyword id="KW-0677">Repeat</keyword>
<keyword id="KW-0690">Ribosome biogenesis</keyword>
<keyword id="KW-0832">Ubl conjugation</keyword>
<proteinExistence type="evidence at protein level"/>
<sequence>MKPRPGVFVDRKLKQRVIQYLSSNRCGKYVDTGILASDLQRLYSVDYGRRKRNAFRIQVEKVFSIISSEKELKNLKELEDGHLAKRARQDEEDEYTESYSDDDSNMEDYPDPQSANPMNSSLLSLYRRGNSESVSTTPKWGQREATTSTPLLTSKTGSVPLKTPARESEGGWFIDKTPGGKKESLPLDLSDDQSNSKKQDSEIQILKDSSLLESDKKRKGRAKGKGNKRKTENLQEVDGEIEALLQKKAKARSTELQISNVKFEDVGGNDATLKEVCKMLIHMRHPEVYQHLGVVPPRGVLLHGPPGCGKTLLAHAIAGELDLPILKVAAPEIVSGVSGESEQKLRELFDQAVSNAPCIVFIDEIDAITPKREVASKDMERRIVAQLLTCMDDLNNVAATARVLVIGATNRPDSLDPALRRAGRFDREVCLGIPDEAARERILQTLCRKLRLPETFNFCHLAHLTPGFVGADLMALCREAAMCAVNRVLMKQQAQQKKKPEIEGLPSEGDQEERLGAEPTSETQDELQRLLGLLRDQDPLSEEQMQGLCIELNDFIVALAEVQPSAKREGFVTVPNVTWADIGALEDIRDELIMAILAPVRNPDQFRTLGLGTPAGILLAGPPGCGKTLLAKAVANESGLNFISVKGPELLNMYVGESERAVRQVFQRAKNSAPCVIFFDEVDALCPRRSDRETGASVRVVNQLLTEMDGLETRQQVFILAATNRPDIIDPAILRPGRLDKTLFVGLPPPADRVAILKTITKNGTKPPLDEDVNLETIANDLRCNCYTGADLTALVREASLCALRQEITAQKNGVGAGELKVSHKHFEDAFKKVKPSISIKDQVMYEALQRSLSQ</sequence>
<feature type="chain" id="PRO_0000084589" description="Nuclear valosin-containing protein-like">
    <location>
        <begin position="1"/>
        <end position="855"/>
    </location>
</feature>
<feature type="region of interest" description="Interaction with RPL5" evidence="1">
    <location>
        <begin position="1"/>
        <end position="219"/>
    </location>
</feature>
<feature type="region of interest" description="Disordered" evidence="3">
    <location>
        <begin position="83"/>
        <end position="234"/>
    </location>
</feature>
<feature type="region of interest" description="Interaction with WDR74" evidence="1">
    <location>
        <begin position="266"/>
        <end position="473"/>
    </location>
</feature>
<feature type="region of interest" description="Disordered" evidence="3">
    <location>
        <begin position="496"/>
        <end position="523"/>
    </location>
</feature>
<feature type="short sequence motif" description="Nucleolar localization signal" evidence="4">
    <location>
        <begin position="49"/>
        <end position="52"/>
    </location>
</feature>
<feature type="short sequence motif" description="Nuclear localization signal" evidence="1">
    <location>
        <begin position="85"/>
        <end position="88"/>
    </location>
</feature>
<feature type="short sequence motif" description="Nuclear localization signal" evidence="1">
    <location>
        <begin position="217"/>
        <end position="231"/>
    </location>
</feature>
<feature type="compositionally biased region" description="Acidic residues" evidence="3">
    <location>
        <begin position="90"/>
        <end position="110"/>
    </location>
</feature>
<feature type="compositionally biased region" description="Polar residues" evidence="3">
    <location>
        <begin position="113"/>
        <end position="123"/>
    </location>
</feature>
<feature type="compositionally biased region" description="Polar residues" evidence="3">
    <location>
        <begin position="131"/>
        <end position="157"/>
    </location>
</feature>
<feature type="compositionally biased region" description="Basic residues" evidence="3">
    <location>
        <begin position="217"/>
        <end position="228"/>
    </location>
</feature>
<feature type="binding site" evidence="2">
    <location>
        <begin position="304"/>
        <end position="311"/>
    </location>
    <ligand>
        <name>ATP</name>
        <dbReference type="ChEBI" id="CHEBI:30616"/>
    </ligand>
</feature>
<feature type="binding site" evidence="2">
    <location>
        <begin position="621"/>
        <end position="628"/>
    </location>
    <ligand>
        <name>ATP</name>
        <dbReference type="ChEBI" id="CHEBI:30616"/>
    </ligand>
</feature>
<feature type="modified residue" description="N6-acetyllysine" evidence="10">
    <location>
        <position position="70"/>
    </location>
</feature>
<feature type="modified residue" description="Phosphoserine" evidence="1">
    <location>
        <position position="133"/>
    </location>
</feature>
<feature type="modified residue" description="Phosphothreonine" evidence="1">
    <location>
        <position position="137"/>
    </location>
</feature>
<feature type="modified residue" description="N6-acetyllysine" evidence="10">
    <location>
        <position position="155"/>
    </location>
</feature>
<feature type="modified residue" description="Phosphoserine" evidence="7 8 9">
    <location>
        <position position="190"/>
    </location>
</feature>
<feature type="modified residue" description="Phosphoserine" evidence="1">
    <location>
        <position position="210"/>
    </location>
</feature>
<feature type="modified residue" description="Phosphoserine" evidence="1">
    <location>
        <position position="214"/>
    </location>
</feature>
<feature type="cross-link" description="Glycyl lysine isopeptide (Lys-Gly) (interchain with G-Cter in SUMO2)" evidence="1">
    <location>
        <position position="207"/>
    </location>
</feature>
<feature type="sequence conflict" description="In Ref. 2; AAH31847." evidence="5" ref="2">
    <original>E</original>
    <variation>K</variation>
    <location>
        <position position="513"/>
    </location>
</feature>
<feature type="helix" evidence="11">
    <location>
        <begin position="11"/>
        <end position="23"/>
    </location>
</feature>
<feature type="strand" evidence="11">
    <location>
        <begin position="27"/>
        <end position="29"/>
    </location>
</feature>
<feature type="helix" evidence="11">
    <location>
        <begin position="32"/>
        <end position="42"/>
    </location>
</feature>
<feature type="turn" evidence="11">
    <location>
        <begin position="43"/>
        <end position="47"/>
    </location>
</feature>
<feature type="helix" evidence="11">
    <location>
        <begin position="52"/>
        <end position="69"/>
    </location>
</feature>
<organism>
    <name type="scientific">Mus musculus</name>
    <name type="common">Mouse</name>
    <dbReference type="NCBI Taxonomy" id="10090"/>
    <lineage>
        <taxon>Eukaryota</taxon>
        <taxon>Metazoa</taxon>
        <taxon>Chordata</taxon>
        <taxon>Craniata</taxon>
        <taxon>Vertebrata</taxon>
        <taxon>Euteleostomi</taxon>
        <taxon>Mammalia</taxon>
        <taxon>Eutheria</taxon>
        <taxon>Euarchontoglires</taxon>
        <taxon>Glires</taxon>
        <taxon>Rodentia</taxon>
        <taxon>Myomorpha</taxon>
        <taxon>Muroidea</taxon>
        <taxon>Muridae</taxon>
        <taxon>Murinae</taxon>
        <taxon>Mus</taxon>
        <taxon>Mus</taxon>
    </lineage>
</organism>
<comment type="function">
    <text evidence="1">Participates in the assembly of the telomerase holoenzyme and effecting of telomerase activity via its interaction with TERT. Involved in both early and late stages of the pre-rRNA processing pathways. Spatiotemporally regulates 60S ribosomal subunit biogenesis in the nucleolus. Catalyzes the release of specific assembly factors, such as WDR74, from pre-60S ribosomal particles through the ATPase activity.</text>
</comment>
<comment type="subunit">
    <text evidence="1 4">Interacts with NCL/nucleolin (PubMed:21474449). Isoform 1 and isoform 2 interact with TERT and isoform 1 exhibits a higher binding affinity for TERT compared to isoform 2. Isoform 1 interacts with MTREX in an ATP-dependent manner; the interaction is required to associate NVL with nuclear RNA exosome. Isoform 1 interacts with RPL5 in an ATP-dependent manner. Interacts with WDR74 (through WDR repeats); the interaction is independent of RNA or pre-60S ribosome particles (By similarity).</text>
</comment>
<comment type="subcellular location">
    <subcellularLocation>
        <location evidence="4">Nucleus</location>
        <location evidence="4">Nucleolus</location>
    </subcellularLocation>
    <subcellularLocation>
        <location evidence="1">Nucleus</location>
        <location evidence="1">Nucleoplasm</location>
    </subcellularLocation>
    <text evidence="1">Associates with pre-ribosomal particles in the nucleus.</text>
</comment>
<comment type="similarity">
    <text evidence="5">Belongs to the AAA ATPase family.</text>
</comment>
<gene>
    <name evidence="6" type="primary">Nvl</name>
</gene>
<reference key="1">
    <citation type="journal article" date="2005" name="Science">
        <title>The transcriptional landscape of the mammalian genome.</title>
        <authorList>
            <person name="Carninci P."/>
            <person name="Kasukawa T."/>
            <person name="Katayama S."/>
            <person name="Gough J."/>
            <person name="Frith M.C."/>
            <person name="Maeda N."/>
            <person name="Oyama R."/>
            <person name="Ravasi T."/>
            <person name="Lenhard B."/>
            <person name="Wells C."/>
            <person name="Kodzius R."/>
            <person name="Shimokawa K."/>
            <person name="Bajic V.B."/>
            <person name="Brenner S.E."/>
            <person name="Batalov S."/>
            <person name="Forrest A.R."/>
            <person name="Zavolan M."/>
            <person name="Davis M.J."/>
            <person name="Wilming L.G."/>
            <person name="Aidinis V."/>
            <person name="Allen J.E."/>
            <person name="Ambesi-Impiombato A."/>
            <person name="Apweiler R."/>
            <person name="Aturaliya R.N."/>
            <person name="Bailey T.L."/>
            <person name="Bansal M."/>
            <person name="Baxter L."/>
            <person name="Beisel K.W."/>
            <person name="Bersano T."/>
            <person name="Bono H."/>
            <person name="Chalk A.M."/>
            <person name="Chiu K.P."/>
            <person name="Choudhary V."/>
            <person name="Christoffels A."/>
            <person name="Clutterbuck D.R."/>
            <person name="Crowe M.L."/>
            <person name="Dalla E."/>
            <person name="Dalrymple B.P."/>
            <person name="de Bono B."/>
            <person name="Della Gatta G."/>
            <person name="di Bernardo D."/>
            <person name="Down T."/>
            <person name="Engstrom P."/>
            <person name="Fagiolini M."/>
            <person name="Faulkner G."/>
            <person name="Fletcher C.F."/>
            <person name="Fukushima T."/>
            <person name="Furuno M."/>
            <person name="Futaki S."/>
            <person name="Gariboldi M."/>
            <person name="Georgii-Hemming P."/>
            <person name="Gingeras T.R."/>
            <person name="Gojobori T."/>
            <person name="Green R.E."/>
            <person name="Gustincich S."/>
            <person name="Harbers M."/>
            <person name="Hayashi Y."/>
            <person name="Hensch T.K."/>
            <person name="Hirokawa N."/>
            <person name="Hill D."/>
            <person name="Huminiecki L."/>
            <person name="Iacono M."/>
            <person name="Ikeo K."/>
            <person name="Iwama A."/>
            <person name="Ishikawa T."/>
            <person name="Jakt M."/>
            <person name="Kanapin A."/>
            <person name="Katoh M."/>
            <person name="Kawasawa Y."/>
            <person name="Kelso J."/>
            <person name="Kitamura H."/>
            <person name="Kitano H."/>
            <person name="Kollias G."/>
            <person name="Krishnan S.P."/>
            <person name="Kruger A."/>
            <person name="Kummerfeld S.K."/>
            <person name="Kurochkin I.V."/>
            <person name="Lareau L.F."/>
            <person name="Lazarevic D."/>
            <person name="Lipovich L."/>
            <person name="Liu J."/>
            <person name="Liuni S."/>
            <person name="McWilliam S."/>
            <person name="Madan Babu M."/>
            <person name="Madera M."/>
            <person name="Marchionni L."/>
            <person name="Matsuda H."/>
            <person name="Matsuzawa S."/>
            <person name="Miki H."/>
            <person name="Mignone F."/>
            <person name="Miyake S."/>
            <person name="Morris K."/>
            <person name="Mottagui-Tabar S."/>
            <person name="Mulder N."/>
            <person name="Nakano N."/>
            <person name="Nakauchi H."/>
            <person name="Ng P."/>
            <person name="Nilsson R."/>
            <person name="Nishiguchi S."/>
            <person name="Nishikawa S."/>
            <person name="Nori F."/>
            <person name="Ohara O."/>
            <person name="Okazaki Y."/>
            <person name="Orlando V."/>
            <person name="Pang K.C."/>
            <person name="Pavan W.J."/>
            <person name="Pavesi G."/>
            <person name="Pesole G."/>
            <person name="Petrovsky N."/>
            <person name="Piazza S."/>
            <person name="Reed J."/>
            <person name="Reid J.F."/>
            <person name="Ring B.Z."/>
            <person name="Ringwald M."/>
            <person name="Rost B."/>
            <person name="Ruan Y."/>
            <person name="Salzberg S.L."/>
            <person name="Sandelin A."/>
            <person name="Schneider C."/>
            <person name="Schoenbach C."/>
            <person name="Sekiguchi K."/>
            <person name="Semple C.A."/>
            <person name="Seno S."/>
            <person name="Sessa L."/>
            <person name="Sheng Y."/>
            <person name="Shibata Y."/>
            <person name="Shimada H."/>
            <person name="Shimada K."/>
            <person name="Silva D."/>
            <person name="Sinclair B."/>
            <person name="Sperling S."/>
            <person name="Stupka E."/>
            <person name="Sugiura K."/>
            <person name="Sultana R."/>
            <person name="Takenaka Y."/>
            <person name="Taki K."/>
            <person name="Tammoja K."/>
            <person name="Tan S.L."/>
            <person name="Tang S."/>
            <person name="Taylor M.S."/>
            <person name="Tegner J."/>
            <person name="Teichmann S.A."/>
            <person name="Ueda H.R."/>
            <person name="van Nimwegen E."/>
            <person name="Verardo R."/>
            <person name="Wei C.L."/>
            <person name="Yagi K."/>
            <person name="Yamanishi H."/>
            <person name="Zabarovsky E."/>
            <person name="Zhu S."/>
            <person name="Zimmer A."/>
            <person name="Hide W."/>
            <person name="Bult C."/>
            <person name="Grimmond S.M."/>
            <person name="Teasdale R.D."/>
            <person name="Liu E.T."/>
            <person name="Brusic V."/>
            <person name="Quackenbush J."/>
            <person name="Wahlestedt C."/>
            <person name="Mattick J.S."/>
            <person name="Hume D.A."/>
            <person name="Kai C."/>
            <person name="Sasaki D."/>
            <person name="Tomaru Y."/>
            <person name="Fukuda S."/>
            <person name="Kanamori-Katayama M."/>
            <person name="Suzuki M."/>
            <person name="Aoki J."/>
            <person name="Arakawa T."/>
            <person name="Iida J."/>
            <person name="Imamura K."/>
            <person name="Itoh M."/>
            <person name="Kato T."/>
            <person name="Kawaji H."/>
            <person name="Kawagashira N."/>
            <person name="Kawashima T."/>
            <person name="Kojima M."/>
            <person name="Kondo S."/>
            <person name="Konno H."/>
            <person name="Nakano K."/>
            <person name="Ninomiya N."/>
            <person name="Nishio T."/>
            <person name="Okada M."/>
            <person name="Plessy C."/>
            <person name="Shibata K."/>
            <person name="Shiraki T."/>
            <person name="Suzuki S."/>
            <person name="Tagami M."/>
            <person name="Waki K."/>
            <person name="Watahiki A."/>
            <person name="Okamura-Oho Y."/>
            <person name="Suzuki H."/>
            <person name="Kawai J."/>
            <person name="Hayashizaki Y."/>
        </authorList>
    </citation>
    <scope>NUCLEOTIDE SEQUENCE [LARGE SCALE MRNA]</scope>
    <source>
        <strain>C57BL/6J</strain>
        <tissue>Cerebellum</tissue>
        <tissue>Lung</tissue>
        <tissue>Ovary</tissue>
    </source>
</reference>
<reference key="2">
    <citation type="journal article" date="2004" name="Genome Res.">
        <title>The status, quality, and expansion of the NIH full-length cDNA project: the Mammalian Gene Collection (MGC).</title>
        <authorList>
            <consortium name="The MGC Project Team"/>
        </authorList>
    </citation>
    <scope>NUCLEOTIDE SEQUENCE [LARGE SCALE MRNA]</scope>
</reference>
<reference key="3">
    <citation type="journal article" date="2007" name="Proc. Natl. Acad. Sci. U.S.A.">
        <title>Large-scale phosphorylation analysis of mouse liver.</title>
        <authorList>
            <person name="Villen J."/>
            <person name="Beausoleil S.A."/>
            <person name="Gerber S.A."/>
            <person name="Gygi S.P."/>
        </authorList>
    </citation>
    <scope>PHOSPHORYLATION [LARGE SCALE ANALYSIS] AT SER-190</scope>
    <scope>IDENTIFICATION BY MASS SPECTROMETRY [LARGE SCALE ANALYSIS]</scope>
    <source>
        <tissue>Liver</tissue>
    </source>
</reference>
<reference key="4">
    <citation type="journal article" date="2009" name="Immunity">
        <title>The phagosomal proteome in interferon-gamma-activated macrophages.</title>
        <authorList>
            <person name="Trost M."/>
            <person name="English L."/>
            <person name="Lemieux S."/>
            <person name="Courcelles M."/>
            <person name="Desjardins M."/>
            <person name="Thibault P."/>
        </authorList>
    </citation>
    <scope>PHOSPHORYLATION [LARGE SCALE ANALYSIS] AT SER-190</scope>
    <scope>IDENTIFICATION BY MASS SPECTROMETRY [LARGE SCALE ANALYSIS]</scope>
</reference>
<reference key="5">
    <citation type="journal article" date="2010" name="Cell">
        <title>A tissue-specific atlas of mouse protein phosphorylation and expression.</title>
        <authorList>
            <person name="Huttlin E.L."/>
            <person name="Jedrychowski M.P."/>
            <person name="Elias J.E."/>
            <person name="Goswami T."/>
            <person name="Rad R."/>
            <person name="Beausoleil S.A."/>
            <person name="Villen J."/>
            <person name="Haas W."/>
            <person name="Sowa M.E."/>
            <person name="Gygi S.P."/>
        </authorList>
    </citation>
    <scope>PHOSPHORYLATION [LARGE SCALE ANALYSIS] AT SER-190</scope>
    <scope>IDENTIFICATION BY MASS SPECTROMETRY [LARGE SCALE ANALYSIS]</scope>
    <source>
        <tissue>Brown adipose tissue</tissue>
        <tissue>Heart</tissue>
        <tissue>Spleen</tissue>
    </source>
</reference>
<reference key="6">
    <citation type="journal article" date="2013" name="Mol. Cell">
        <title>SIRT5-mediated lysine desuccinylation impacts diverse metabolic pathways.</title>
        <authorList>
            <person name="Park J."/>
            <person name="Chen Y."/>
            <person name="Tishkoff D.X."/>
            <person name="Peng C."/>
            <person name="Tan M."/>
            <person name="Dai L."/>
            <person name="Xie Z."/>
            <person name="Zhang Y."/>
            <person name="Zwaans B.M."/>
            <person name="Skinner M.E."/>
            <person name="Lombard D.B."/>
            <person name="Zhao Y."/>
        </authorList>
    </citation>
    <scope>ACETYLATION [LARGE SCALE ANALYSIS] AT LYS-70 AND LYS-155</scope>
    <scope>IDENTIFICATION BY MASS SPECTROMETRY [LARGE SCALE ANALYSIS]</scope>
    <source>
        <tissue>Embryonic fibroblast</tissue>
    </source>
</reference>
<reference key="7">
    <citation type="journal article" date="2011" name="J. Biol. Chem.">
        <title>Structure and function of the N-terminal nucleolin binding domain of nuclear valosin-containing protein-like 2 (NVL2) harboring a nucleolar localization signal.</title>
        <authorList>
            <person name="Fujiwara Y."/>
            <person name="Fujiwara K."/>
            <person name="Goda N."/>
            <person name="Iwaya N."/>
            <person name="Tenno T."/>
            <person name="Shirakawa M."/>
            <person name="Hiroaki H."/>
        </authorList>
    </citation>
    <scope>STRUCTURE BY NMR OF 1-74</scope>
    <scope>SUBCELLULAR LOCATION</scope>
    <scope>INTERACTION WITH NCL/NUCLEOLIN</scope>
    <scope>NUCLEOLAR LOCALIZATION SIGNAL</scope>
</reference>
<accession>Q9DBY8</accession>
<accession>Q3USC4</accession>
<accession>Q8BW27</accession>
<accession>Q8K2B5</accession>
<protein>
    <recommendedName>
        <fullName>Nuclear valosin-containing protein-like</fullName>
        <shortName>NVLp</shortName>
        <shortName>Nuclear VCP-like protein</shortName>
    </recommendedName>
</protein>